<organism>
    <name type="scientific">Human immunodeficiency virus type 1 group M subtype G (isolate 92NG083)</name>
    <name type="common">HIV-1</name>
    <dbReference type="NCBI Taxonomy" id="388825"/>
    <lineage>
        <taxon>Viruses</taxon>
        <taxon>Riboviria</taxon>
        <taxon>Pararnavirae</taxon>
        <taxon>Artverviricota</taxon>
        <taxon>Revtraviricetes</taxon>
        <taxon>Ortervirales</taxon>
        <taxon>Retroviridae</taxon>
        <taxon>Orthoretrovirinae</taxon>
        <taxon>Lentivirus</taxon>
        <taxon>Human immunodeficiency virus type 1</taxon>
    </lineage>
</organism>
<comment type="function">
    <text evidence="2">Counteracts the innate antiviral activity of host APOBEC3F and APOBEC3G by promoting their ubiquitination and degradation. Acts as a substrate recognition component of an E3 ubiquitin-protein ligase complex: mechanistically, Vif hijacks a host cullin-5-RING E3 ubiquitin-protein ligase complex (ECS complex) and the transcription coactivator CBFB/CBF-beta to form an active E3 ubiquitin-protein ligase complex that targets APOBEC3G and APOBEC3F for polyubiquitination, leading to their degradation by the proteasome. Vif interaction with APOBEC3G also blocks its cytidine deaminase activity in a proteasome-independent manner, suggesting a dual inhibitory mechanism. May interact directly with APOBEC3G mRNA in order to inhibit its translation. Association with CBFB/CBF-beta also inhibits the transcription coactivator activity of CBFB/CBF-beta. Seems to play a role in viral morphology by affecting the stability of the viral nucleoprotein core. Finally, Vif also contributes to the G2 cell cycle arrest observed in HIV infected cells.</text>
</comment>
<comment type="subunit">
    <text evidence="1">Homomultimer; in vitro and presumably in vivo. Interacts with viral RNA and Pr55Gag precursor; these interactions mediate Vif incorporation into the virion. Interacts with the viral reverse transcriptase. Forms cullin-5-RING E3 ubiquitin-protein ligase complex (ECS complex) by interacting with host CUL5, RBX2, elongin BC complex (ELOB and ELOC) and CBFB/CBF-beta. Within the ECS complex, Vif interacts directly with host CUL5, ELOC and APOBEC (APOBEC3F and APOBEC3G) substrates. The ECS complex also contains some single-stranded RNA (ssRNA) that acts as a glue that bridges Vif with APOBEC (APOBEC3F and APOBEC3G) substrates. Interacts with host UBCE7IP1 isoform 3/ZIN and possibly with SAT. Interacts with host tyrosine kinases HCK and FYN; these interactions may decrease level of phosphorylated APOBEC3G incorporation into virions. Interacts with host ABCE1; this interaction may play a role in protecting viral RNA from damage during viral assembly. Interacts with host MDM2; this interaction targets Vif for degradation by the proteasome.</text>
</comment>
<comment type="subcellular location">
    <subcellularLocation>
        <location evidence="2">Host cytoplasm</location>
    </subcellularLocation>
    <subcellularLocation>
        <location evidence="2">Host cell membrane</location>
        <topology evidence="2">Peripheral membrane protein</topology>
        <orientation evidence="2">Cytoplasmic side</orientation>
    </subcellularLocation>
    <subcellularLocation>
        <location evidence="2">Virion</location>
    </subcellularLocation>
    <text evidence="2">In the cytoplasm, seems to colocalize with intermediate filament vimentin. A fraction is associated with the cytoplasmic side of cellular membranes, presumably via the interaction with Pr55Gag precursor. Incorporated in virions at a ratio of approximately 7 to 20 molecules per virion.</text>
</comment>
<comment type="induction">
    <text evidence="2">Expressed late during infection in a Rev-dependent manner.</text>
</comment>
<comment type="domain">
    <text evidence="2">The BC-like-box motif mediates the interaction with elongin BC complex.</text>
</comment>
<comment type="domain">
    <text evidence="2">The HCCH motif (H-x(5)-C-x(18)-C-x(5)-H) mediates the interaction with CUL5.</text>
</comment>
<comment type="PTM">
    <text evidence="2">Processed in virion by the viral protease.</text>
</comment>
<comment type="PTM">
    <text evidence="2">Highly phosphorylated on serine and threonine residues.</text>
</comment>
<comment type="PTM">
    <text evidence="2">Polyubiquitinated and degraded by the proteasome in the presence of APOBEC3G.</text>
</comment>
<comment type="miscellaneous">
    <text evidence="2">Vif-defective viruses show catastrophic failure in reverse transcription due to APOBEC-induced mutations that initiate a DNA base repair pathway and compromise the structural integrity of the ssDNA. In the absence of Vif, the virion is morphologically abnormal.</text>
</comment>
<comment type="miscellaneous">
    <text evidence="2">HIV-1 lineages are divided in three main groups, M (for Major), O (for Outlier), and N (for New, or Non-M, Non-O). The vast majority of strains found worldwide belong to the group M. Group O seems to be endemic to and largely confined to Cameroon and neighboring countries in West Central Africa, where these viruses represent a small minority of HIV-1 strains. The group N is represented by a limited number of isolates from Cameroonian persons. The group M is further subdivided in 9 clades or subtypes (A to D, F to H, J and K).</text>
</comment>
<comment type="miscellaneous">
    <text evidence="2">Required for replication in 'nonpermissive' cells, including primary T-cells, macrophages and certain T-cell lines, but is dispensable for replication in 'permissive' cell lines, such as 293T cells. In nonpermissive cells, Vif-defective viruses can produce virions, but they fail to complete reverse transcription and cannot successfully infect new cells.</text>
</comment>
<comment type="similarity">
    <text evidence="2">Belongs to the primate lentivirus group Vif protein family.</text>
</comment>
<name>VIF_HV19N</name>
<proteinExistence type="inferred from homology"/>
<organismHost>
    <name type="scientific">Homo sapiens</name>
    <name type="common">Human</name>
    <dbReference type="NCBI Taxonomy" id="9606"/>
</organismHost>
<reference key="1">
    <citation type="journal article" date="1998" name="J. Virol.">
        <title>A comprehensive panel of near-full-length clones and reference sequences for non-subtype B isolates of human immunodeficiency virus type 1.</title>
        <authorList>
            <person name="Gao F."/>
            <person name="Robertson D.L."/>
            <person name="Carruthers C.D."/>
            <person name="Morrison S.G."/>
            <person name="Jian B."/>
            <person name="Chen Y."/>
            <person name="Barre-Sinoussi F."/>
            <person name="Girard M."/>
            <person name="Srinivasan A."/>
            <person name="Abimiku A.G."/>
            <person name="Shaw G.M."/>
            <person name="Sharp P.M."/>
            <person name="Hahn B.H."/>
        </authorList>
    </citation>
    <scope>NUCLEOTIDE SEQUENCE [GENOMIC DNA]</scope>
</reference>
<accession>O41799</accession>
<gene>
    <name evidence="2" type="primary">vif</name>
</gene>
<dbReference type="EMBL" id="U88826">
    <property type="protein sequence ID" value="AAC32658.1"/>
    <property type="molecule type" value="Genomic_DNA"/>
</dbReference>
<dbReference type="SMR" id="O41799"/>
<dbReference type="Proteomes" id="UP000128912">
    <property type="component" value="Segment"/>
</dbReference>
<dbReference type="GO" id="GO:0030430">
    <property type="term" value="C:host cell cytoplasm"/>
    <property type="evidence" value="ECO:0007669"/>
    <property type="project" value="UniProtKB-SubCell"/>
</dbReference>
<dbReference type="GO" id="GO:0020002">
    <property type="term" value="C:host cell plasma membrane"/>
    <property type="evidence" value="ECO:0007669"/>
    <property type="project" value="UniProtKB-SubCell"/>
</dbReference>
<dbReference type="GO" id="GO:0016020">
    <property type="term" value="C:membrane"/>
    <property type="evidence" value="ECO:0007669"/>
    <property type="project" value="UniProtKB-UniRule"/>
</dbReference>
<dbReference type="GO" id="GO:0044423">
    <property type="term" value="C:virion component"/>
    <property type="evidence" value="ECO:0007669"/>
    <property type="project" value="UniProtKB-UniRule"/>
</dbReference>
<dbReference type="GO" id="GO:0046872">
    <property type="term" value="F:metal ion binding"/>
    <property type="evidence" value="ECO:0007669"/>
    <property type="project" value="UniProtKB-KW"/>
</dbReference>
<dbReference type="GO" id="GO:0003723">
    <property type="term" value="F:RNA binding"/>
    <property type="evidence" value="ECO:0007669"/>
    <property type="project" value="UniProtKB-UniRule"/>
</dbReference>
<dbReference type="GO" id="GO:0019058">
    <property type="term" value="P:viral life cycle"/>
    <property type="evidence" value="ECO:0007669"/>
    <property type="project" value="InterPro"/>
</dbReference>
<dbReference type="HAMAP" id="MF_04081">
    <property type="entry name" value="HIV_VIF"/>
    <property type="match status" value="1"/>
</dbReference>
<dbReference type="InterPro" id="IPR000475">
    <property type="entry name" value="Vif"/>
</dbReference>
<dbReference type="Pfam" id="PF00559">
    <property type="entry name" value="Vif"/>
    <property type="match status" value="1"/>
</dbReference>
<dbReference type="PRINTS" id="PR00349">
    <property type="entry name" value="VIRIONINFFCT"/>
</dbReference>
<evidence type="ECO:0000250" key="1">
    <source>
        <dbReference type="UniProtKB" id="O70897"/>
    </source>
</evidence>
<evidence type="ECO:0000255" key="2">
    <source>
        <dbReference type="HAMAP-Rule" id="MF_04081"/>
    </source>
</evidence>
<evidence type="ECO:0000256" key="3">
    <source>
        <dbReference type="SAM" id="MobiDB-lite"/>
    </source>
</evidence>
<feature type="chain" id="PRO_0000441074" description="Virion infectivity factor" evidence="2">
    <location>
        <begin position="1"/>
        <end position="192"/>
    </location>
</feature>
<feature type="chain" id="PRO_0000441075" description="p17" evidence="2">
    <location>
        <begin position="1"/>
        <end position="150"/>
    </location>
</feature>
<feature type="chain" id="PRO_0000441076" description="p7" evidence="2">
    <location>
        <begin position="151"/>
        <end position="192"/>
    </location>
</feature>
<feature type="region of interest" description="Interaction with host APOBEC3F; F1-box" evidence="2">
    <location>
        <begin position="14"/>
        <end position="17"/>
    </location>
</feature>
<feature type="region of interest" description="Interaction with host APOBEC3G; G-box" evidence="2">
    <location>
        <begin position="40"/>
        <end position="44"/>
    </location>
</feature>
<feature type="region of interest" description="Interaction with host APOBEC3F and APOBEC3G; FG-box" evidence="2">
    <location>
        <begin position="54"/>
        <end position="72"/>
    </location>
</feature>
<feature type="region of interest" description="Interaction with host APOBEC3F; F2-box" evidence="2">
    <location>
        <begin position="74"/>
        <end position="79"/>
    </location>
</feature>
<feature type="region of interest" description="RNA-binding" evidence="2">
    <location>
        <begin position="75"/>
        <end position="114"/>
    </location>
</feature>
<feature type="region of interest" description="SOCS box-like" evidence="2">
    <location>
        <begin position="151"/>
        <end position="180"/>
    </location>
</feature>
<feature type="region of interest" description="Multimerization" evidence="2">
    <location>
        <begin position="151"/>
        <end position="164"/>
    </location>
</feature>
<feature type="region of interest" description="Disordered" evidence="3">
    <location>
        <begin position="158"/>
        <end position="192"/>
    </location>
</feature>
<feature type="region of interest" description="Membrane association" evidence="2">
    <location>
        <begin position="171"/>
        <end position="172"/>
    </location>
</feature>
<feature type="short sequence motif" description="HCCH motif" evidence="2">
    <location>
        <begin position="108"/>
        <end position="139"/>
    </location>
</feature>
<feature type="short sequence motif" description="BC-box-like motif" evidence="2">
    <location>
        <begin position="144"/>
        <end position="153"/>
    </location>
</feature>
<feature type="compositionally biased region" description="Basic and acidic residues" evidence="3">
    <location>
        <begin position="169"/>
        <end position="186"/>
    </location>
</feature>
<feature type="binding site" evidence="2">
    <location>
        <position position="108"/>
    </location>
    <ligand>
        <name>Zn(2+)</name>
        <dbReference type="ChEBI" id="CHEBI:29105"/>
    </ligand>
</feature>
<feature type="binding site" evidence="2">
    <location>
        <position position="114"/>
    </location>
    <ligand>
        <name>Zn(2+)</name>
        <dbReference type="ChEBI" id="CHEBI:29105"/>
    </ligand>
</feature>
<feature type="binding site" evidence="2">
    <location>
        <position position="133"/>
    </location>
    <ligand>
        <name>Zn(2+)</name>
        <dbReference type="ChEBI" id="CHEBI:29105"/>
    </ligand>
</feature>
<feature type="binding site" evidence="2">
    <location>
        <position position="139"/>
    </location>
    <ligand>
        <name>Zn(2+)</name>
        <dbReference type="ChEBI" id="CHEBI:29105"/>
    </ligand>
</feature>
<feature type="site" description="Cleavage in virion (by viral protease)" evidence="2">
    <location>
        <begin position="150"/>
        <end position="151"/>
    </location>
</feature>
<feature type="modified residue" description="Phosphothreonine; by host MAP4K1" evidence="2">
    <location>
        <position position="96"/>
    </location>
</feature>
<feature type="modified residue" description="Phosphoserine; by host" evidence="2">
    <location>
        <position position="144"/>
    </location>
</feature>
<feature type="modified residue" description="Phosphothreonine; by host" evidence="2">
    <location>
        <position position="155"/>
    </location>
</feature>
<feature type="modified residue" description="Phosphoserine; by host MAP4K1" evidence="2">
    <location>
        <position position="165"/>
    </location>
</feature>
<feature type="modified residue" description="Phosphothreonine; by host" evidence="2">
    <location>
        <position position="188"/>
    </location>
</feature>
<sequence length="192" mass="22685">MENRWQVVIVWQVDRMRIRTWNSLVKHHMYVSKKAKGWFYRHHYESRHPRVSSEVHIPLRDATLVVRTYWGLHAGEKDWQLGHGVSIEWRQKRYSTQIDPNTADHLIHLYYFDCFSESAIRKAILGEIVSPRCEYPAGHNKVGSLQYLASKALVTPTRKRPPLPSVGKLAEDRWNKPQKTRDHRENPTMNGH</sequence>
<protein>
    <recommendedName>
        <fullName evidence="2">Virion infectivity factor</fullName>
        <shortName evidence="2">Vif</shortName>
    </recommendedName>
    <alternativeName>
        <fullName evidence="2">SOR protein</fullName>
    </alternativeName>
    <component>
        <recommendedName>
            <fullName evidence="2">p17</fullName>
        </recommendedName>
    </component>
    <component>
        <recommendedName>
            <fullName evidence="2">p7</fullName>
        </recommendedName>
    </component>
</protein>
<keyword id="KW-0014">AIDS</keyword>
<keyword id="KW-1032">Host cell membrane</keyword>
<keyword id="KW-1035">Host cytoplasm</keyword>
<keyword id="KW-1043">Host membrane</keyword>
<keyword id="KW-0945">Host-virus interaction</keyword>
<keyword id="KW-0472">Membrane</keyword>
<keyword id="KW-0479">Metal-binding</keyword>
<keyword id="KW-0597">Phosphoprotein</keyword>
<keyword id="KW-0694">RNA-binding</keyword>
<keyword id="KW-0832">Ubl conjugation</keyword>
<keyword id="KW-0833">Ubl conjugation pathway</keyword>
<keyword id="KW-0946">Virion</keyword>
<keyword id="KW-0862">Zinc</keyword>